<evidence type="ECO:0000250" key="1"/>
<evidence type="ECO:0000305" key="2"/>
<keyword id="KW-0963">Cytoplasm</keyword>
<keyword id="KW-0456">Lyase</keyword>
<keyword id="KW-0862">Zinc</keyword>
<comment type="function">
    <text>Reversible hydration of carbon dioxide.</text>
</comment>
<comment type="catalytic activity">
    <reaction>
        <text>hydrogencarbonate + H(+) = CO2 + H2O</text>
        <dbReference type="Rhea" id="RHEA:10748"/>
        <dbReference type="ChEBI" id="CHEBI:15377"/>
        <dbReference type="ChEBI" id="CHEBI:15378"/>
        <dbReference type="ChEBI" id="CHEBI:16526"/>
        <dbReference type="ChEBI" id="CHEBI:17544"/>
        <dbReference type="EC" id="4.2.1.1"/>
    </reaction>
</comment>
<comment type="subunit">
    <text evidence="1">Homohexamer.</text>
</comment>
<comment type="subcellular location">
    <subcellularLocation>
        <location evidence="2">Cytoplasm</location>
    </subcellularLocation>
</comment>
<comment type="domain">
    <text evidence="1">Possesses a transit-like peptide, but it is proposed that this peptide is not removed and that therefore the enzyme stays in the cytoplasm instead of going to the chloroplast.</text>
</comment>
<comment type="similarity">
    <text evidence="2">Belongs to the beta-class carbonic anhydrase family.</text>
</comment>
<protein>
    <recommendedName>
        <fullName>Carbonic anhydrase</fullName>
        <ecNumber>4.2.1.1</ecNumber>
    </recommendedName>
    <alternativeName>
        <fullName>Carbonate dehydratase</fullName>
    </alternativeName>
</protein>
<feature type="chain" id="PRO_0000077457" description="Carbonic anhydrase">
    <location>
        <begin position="1"/>
        <end position="329"/>
    </location>
</feature>
<feature type="region of interest" description="Chloroplast transit peptide-like">
    <location>
        <begin position="1"/>
        <end position="108"/>
    </location>
</feature>
<organism>
    <name type="scientific">Flaveria pringlei</name>
    <dbReference type="NCBI Taxonomy" id="4226"/>
    <lineage>
        <taxon>Eukaryota</taxon>
        <taxon>Viridiplantae</taxon>
        <taxon>Streptophyta</taxon>
        <taxon>Embryophyta</taxon>
        <taxon>Tracheophyta</taxon>
        <taxon>Spermatophyta</taxon>
        <taxon>Magnoliopsida</taxon>
        <taxon>eudicotyledons</taxon>
        <taxon>Gunneridae</taxon>
        <taxon>Pentapetalae</taxon>
        <taxon>asterids</taxon>
        <taxon>campanulids</taxon>
        <taxon>Asterales</taxon>
        <taxon>Asteraceae</taxon>
        <taxon>Asteroideae</taxon>
        <taxon>Heliantheae alliance</taxon>
        <taxon>Tageteae</taxon>
        <taxon>Flaveria</taxon>
    </lineage>
</organism>
<reference key="1">
    <citation type="journal article" date="1995" name="Plant Mol. Biol.">
        <title>Molecular comparison of carbonic anhydrase from Flaveria species demonstrating different photosynthetic pathways.</title>
        <authorList>
            <person name="Ludwig M."/>
            <person name="Burnell J.N."/>
        </authorList>
    </citation>
    <scope>NUCLEOTIDE SEQUENCE [MRNA]</scope>
    <source>
        <tissue>Leaf</tissue>
    </source>
</reference>
<dbReference type="EC" id="4.2.1.1"/>
<dbReference type="EMBL" id="U19737">
    <property type="protein sequence ID" value="AAA86992.1"/>
    <property type="molecule type" value="mRNA"/>
</dbReference>
<dbReference type="PIR" id="S61884">
    <property type="entry name" value="S61884"/>
</dbReference>
<dbReference type="SMR" id="P46281"/>
<dbReference type="GO" id="GO:0005737">
    <property type="term" value="C:cytoplasm"/>
    <property type="evidence" value="ECO:0007669"/>
    <property type="project" value="UniProtKB-SubCell"/>
</dbReference>
<dbReference type="GO" id="GO:0004089">
    <property type="term" value="F:carbonate dehydratase activity"/>
    <property type="evidence" value="ECO:0007669"/>
    <property type="project" value="UniProtKB-EC"/>
</dbReference>
<dbReference type="GO" id="GO:0008270">
    <property type="term" value="F:zinc ion binding"/>
    <property type="evidence" value="ECO:0007669"/>
    <property type="project" value="InterPro"/>
</dbReference>
<dbReference type="GO" id="GO:0015976">
    <property type="term" value="P:carbon utilization"/>
    <property type="evidence" value="ECO:0007669"/>
    <property type="project" value="InterPro"/>
</dbReference>
<dbReference type="CDD" id="cd00884">
    <property type="entry name" value="beta_CA_cladeB"/>
    <property type="match status" value="1"/>
</dbReference>
<dbReference type="FunFam" id="3.40.1050.10:FF:000002">
    <property type="entry name" value="Carbonic anhydrase"/>
    <property type="match status" value="1"/>
</dbReference>
<dbReference type="Gene3D" id="3.40.1050.10">
    <property type="entry name" value="Carbonic anhydrase"/>
    <property type="match status" value="1"/>
</dbReference>
<dbReference type="InterPro" id="IPR045066">
    <property type="entry name" value="Beta_CA_cladeB"/>
</dbReference>
<dbReference type="InterPro" id="IPR001765">
    <property type="entry name" value="Carbonic_anhydrase"/>
</dbReference>
<dbReference type="InterPro" id="IPR015892">
    <property type="entry name" value="Carbonic_anhydrase_CS"/>
</dbReference>
<dbReference type="InterPro" id="IPR036874">
    <property type="entry name" value="Carbonic_anhydrase_sf"/>
</dbReference>
<dbReference type="PANTHER" id="PTHR11002:SF56">
    <property type="entry name" value="BETA CARBONIC ANHYDRASE 2, CHLOROPLASTIC"/>
    <property type="match status" value="1"/>
</dbReference>
<dbReference type="PANTHER" id="PTHR11002">
    <property type="entry name" value="CARBONIC ANHYDRASE"/>
    <property type="match status" value="1"/>
</dbReference>
<dbReference type="Pfam" id="PF00484">
    <property type="entry name" value="Pro_CA"/>
    <property type="match status" value="1"/>
</dbReference>
<dbReference type="SMART" id="SM00947">
    <property type="entry name" value="Pro_CA"/>
    <property type="match status" value="1"/>
</dbReference>
<dbReference type="SUPFAM" id="SSF53056">
    <property type="entry name" value="beta-carbonic anhydrase, cab"/>
    <property type="match status" value="1"/>
</dbReference>
<dbReference type="PROSITE" id="PS00704">
    <property type="entry name" value="PROK_CO2_ANHYDRASE_1"/>
    <property type="match status" value="1"/>
</dbReference>
<dbReference type="PROSITE" id="PS00705">
    <property type="entry name" value="PROK_CO2_ANHYDRASE_2"/>
    <property type="match status" value="1"/>
</dbReference>
<proteinExistence type="evidence at transcript level"/>
<accession>P46281</accession>
<sequence length="329" mass="35486">MSTASAFAINAPSFVNASSLKKSSSSARSGVLSARFTCNSSSSSSSATPPSLIRNEPVFAAPAPIITPNWTEDGNESYEEAIDALKKMLIEKGELEPVAAARIDQITAQAAAPDTKAPFDPVERIKSGFVKFKTEKFVTNPVLYDELAKGQSPKFMVFACSDSRVCPSHVLDFQPGEAFVVRNVANMVPPFDKTKYSGVGAAVEYAVLHLKVQEIFVIGHSRCGGIKGLMTFPDEGPHSTDFIEDWVKVCLPAKSKVVAEHNGTHLDDQCVLCEKEAVNVSLGNLLTYPFVRDGLRNNTLALKGGHYDFVNGTFELWALDFGLSSPTSV</sequence>
<name>CAHX_FLAPR</name>